<dbReference type="EMBL" id="AK077317">
    <property type="protein sequence ID" value="BAC36746.1"/>
    <property type="status" value="ALT_INIT"/>
    <property type="molecule type" value="mRNA"/>
</dbReference>
<dbReference type="EMBL" id="AK090165">
    <property type="protein sequence ID" value="BAC41120.1"/>
    <property type="molecule type" value="mRNA"/>
</dbReference>
<dbReference type="EMBL" id="BC018219">
    <property type="protein sequence ID" value="AAH18219.1"/>
    <property type="status" value="ALT_INIT"/>
    <property type="molecule type" value="mRNA"/>
</dbReference>
<dbReference type="CCDS" id="CCDS27090.2">
    <molecule id="Q8VEL9-1"/>
</dbReference>
<dbReference type="RefSeq" id="NP_542764.2">
    <property type="nucleotide sequence ID" value="NM_080726.3"/>
</dbReference>
<dbReference type="PDB" id="3Q85">
    <property type="method" value="X-ray"/>
    <property type="resolution" value="1.76 A"/>
    <property type="chains" value="A/B=114-282"/>
</dbReference>
<dbReference type="PDBsum" id="3Q85"/>
<dbReference type="SMR" id="Q8VEL9"/>
<dbReference type="BioGRID" id="228311">
    <property type="interactions" value="1"/>
</dbReference>
<dbReference type="FunCoup" id="Q8VEL9">
    <property type="interactions" value="590"/>
</dbReference>
<dbReference type="IntAct" id="Q8VEL9">
    <property type="interactions" value="1"/>
</dbReference>
<dbReference type="MINT" id="Q8VEL9"/>
<dbReference type="STRING" id="10090.ENSMUSP00000127199"/>
<dbReference type="GlyGen" id="Q8VEL9">
    <property type="glycosylation" value="1 site, 1 O-linked glycan (1 site)"/>
</dbReference>
<dbReference type="iPTMnet" id="Q8VEL9"/>
<dbReference type="PhosphoSitePlus" id="Q8VEL9"/>
<dbReference type="PaxDb" id="10090-ENSMUSP00000127199"/>
<dbReference type="ProteomicsDB" id="253218">
    <molecule id="Q8VEL9-1"/>
</dbReference>
<dbReference type="ProteomicsDB" id="253219">
    <molecule id="Q8VEL9-2"/>
</dbReference>
<dbReference type="ABCD" id="Q8VEL9">
    <property type="antibodies" value="1 sequenced antibody"/>
</dbReference>
<dbReference type="DNASU" id="140743"/>
<dbReference type="GeneID" id="140743"/>
<dbReference type="KEGG" id="mmu:140743"/>
<dbReference type="AGR" id="MGI:2155260"/>
<dbReference type="CTD" id="161253"/>
<dbReference type="MGI" id="MGI:2155260">
    <property type="gene designation" value="Rem2"/>
</dbReference>
<dbReference type="eggNOG" id="KOG0395">
    <property type="taxonomic scope" value="Eukaryota"/>
</dbReference>
<dbReference type="InParanoid" id="Q8VEL9"/>
<dbReference type="OrthoDB" id="5239715at2759"/>
<dbReference type="PhylomeDB" id="Q8VEL9"/>
<dbReference type="BioGRID-ORCS" id="140743">
    <property type="hits" value="0 hits in 77 CRISPR screens"/>
</dbReference>
<dbReference type="EvolutionaryTrace" id="Q8VEL9"/>
<dbReference type="PRO" id="PR:Q8VEL9"/>
<dbReference type="Proteomes" id="UP000000589">
    <property type="component" value="Unplaced"/>
</dbReference>
<dbReference type="RNAct" id="Q8VEL9">
    <property type="molecule type" value="protein"/>
</dbReference>
<dbReference type="GO" id="GO:0005886">
    <property type="term" value="C:plasma membrane"/>
    <property type="evidence" value="ECO:0007669"/>
    <property type="project" value="UniProtKB-SubCell"/>
</dbReference>
<dbReference type="GO" id="GO:0005525">
    <property type="term" value="F:GTP binding"/>
    <property type="evidence" value="ECO:0007669"/>
    <property type="project" value="UniProtKB-KW"/>
</dbReference>
<dbReference type="GO" id="GO:0003924">
    <property type="term" value="F:GTPase activity"/>
    <property type="evidence" value="ECO:0007669"/>
    <property type="project" value="InterPro"/>
</dbReference>
<dbReference type="CDD" id="cd04148">
    <property type="entry name" value="RGK"/>
    <property type="match status" value="1"/>
</dbReference>
<dbReference type="DisProt" id="DP02573"/>
<dbReference type="FunFam" id="3.40.50.300:FF:001032">
    <property type="entry name" value="GTP-binding protein REM 2"/>
    <property type="match status" value="1"/>
</dbReference>
<dbReference type="Gene3D" id="3.40.50.300">
    <property type="entry name" value="P-loop containing nucleotide triphosphate hydrolases"/>
    <property type="match status" value="1"/>
</dbReference>
<dbReference type="InterPro" id="IPR027417">
    <property type="entry name" value="P-loop_NTPase"/>
</dbReference>
<dbReference type="InterPro" id="IPR051641">
    <property type="entry name" value="RGK_GTP-binding_reg"/>
</dbReference>
<dbReference type="InterPro" id="IPR025662">
    <property type="entry name" value="Sigma_54_int_dom_ATP-bd_1"/>
</dbReference>
<dbReference type="InterPro" id="IPR001806">
    <property type="entry name" value="Small_GTPase"/>
</dbReference>
<dbReference type="PANTHER" id="PTHR45775:SF5">
    <property type="entry name" value="GTP-BINDING PROTEIN REM 2"/>
    <property type="match status" value="1"/>
</dbReference>
<dbReference type="PANTHER" id="PTHR45775">
    <property type="entry name" value="RAD, GEM/KIR FAMILY MEMBER 2, ISOFORM C"/>
    <property type="match status" value="1"/>
</dbReference>
<dbReference type="Pfam" id="PF00071">
    <property type="entry name" value="Ras"/>
    <property type="match status" value="1"/>
</dbReference>
<dbReference type="PRINTS" id="PR00449">
    <property type="entry name" value="RASTRNSFRMNG"/>
</dbReference>
<dbReference type="SMART" id="SM00175">
    <property type="entry name" value="RAB"/>
    <property type="match status" value="1"/>
</dbReference>
<dbReference type="SMART" id="SM00173">
    <property type="entry name" value="RAS"/>
    <property type="match status" value="1"/>
</dbReference>
<dbReference type="SMART" id="SM00174">
    <property type="entry name" value="RHO"/>
    <property type="match status" value="1"/>
</dbReference>
<dbReference type="SUPFAM" id="SSF52540">
    <property type="entry name" value="P-loop containing nucleoside triphosphate hydrolases"/>
    <property type="match status" value="1"/>
</dbReference>
<dbReference type="PROSITE" id="PS51421">
    <property type="entry name" value="RAS"/>
    <property type="match status" value="1"/>
</dbReference>
<reference key="1">
    <citation type="journal article" date="2005" name="Science">
        <title>The transcriptional landscape of the mammalian genome.</title>
        <authorList>
            <person name="Carninci P."/>
            <person name="Kasukawa T."/>
            <person name="Katayama S."/>
            <person name="Gough J."/>
            <person name="Frith M.C."/>
            <person name="Maeda N."/>
            <person name="Oyama R."/>
            <person name="Ravasi T."/>
            <person name="Lenhard B."/>
            <person name="Wells C."/>
            <person name="Kodzius R."/>
            <person name="Shimokawa K."/>
            <person name="Bajic V.B."/>
            <person name="Brenner S.E."/>
            <person name="Batalov S."/>
            <person name="Forrest A.R."/>
            <person name="Zavolan M."/>
            <person name="Davis M.J."/>
            <person name="Wilming L.G."/>
            <person name="Aidinis V."/>
            <person name="Allen J.E."/>
            <person name="Ambesi-Impiombato A."/>
            <person name="Apweiler R."/>
            <person name="Aturaliya R.N."/>
            <person name="Bailey T.L."/>
            <person name="Bansal M."/>
            <person name="Baxter L."/>
            <person name="Beisel K.W."/>
            <person name="Bersano T."/>
            <person name="Bono H."/>
            <person name="Chalk A.M."/>
            <person name="Chiu K.P."/>
            <person name="Choudhary V."/>
            <person name="Christoffels A."/>
            <person name="Clutterbuck D.R."/>
            <person name="Crowe M.L."/>
            <person name="Dalla E."/>
            <person name="Dalrymple B.P."/>
            <person name="de Bono B."/>
            <person name="Della Gatta G."/>
            <person name="di Bernardo D."/>
            <person name="Down T."/>
            <person name="Engstrom P."/>
            <person name="Fagiolini M."/>
            <person name="Faulkner G."/>
            <person name="Fletcher C.F."/>
            <person name="Fukushima T."/>
            <person name="Furuno M."/>
            <person name="Futaki S."/>
            <person name="Gariboldi M."/>
            <person name="Georgii-Hemming P."/>
            <person name="Gingeras T.R."/>
            <person name="Gojobori T."/>
            <person name="Green R.E."/>
            <person name="Gustincich S."/>
            <person name="Harbers M."/>
            <person name="Hayashi Y."/>
            <person name="Hensch T.K."/>
            <person name="Hirokawa N."/>
            <person name="Hill D."/>
            <person name="Huminiecki L."/>
            <person name="Iacono M."/>
            <person name="Ikeo K."/>
            <person name="Iwama A."/>
            <person name="Ishikawa T."/>
            <person name="Jakt M."/>
            <person name="Kanapin A."/>
            <person name="Katoh M."/>
            <person name="Kawasawa Y."/>
            <person name="Kelso J."/>
            <person name="Kitamura H."/>
            <person name="Kitano H."/>
            <person name="Kollias G."/>
            <person name="Krishnan S.P."/>
            <person name="Kruger A."/>
            <person name="Kummerfeld S.K."/>
            <person name="Kurochkin I.V."/>
            <person name="Lareau L.F."/>
            <person name="Lazarevic D."/>
            <person name="Lipovich L."/>
            <person name="Liu J."/>
            <person name="Liuni S."/>
            <person name="McWilliam S."/>
            <person name="Madan Babu M."/>
            <person name="Madera M."/>
            <person name="Marchionni L."/>
            <person name="Matsuda H."/>
            <person name="Matsuzawa S."/>
            <person name="Miki H."/>
            <person name="Mignone F."/>
            <person name="Miyake S."/>
            <person name="Morris K."/>
            <person name="Mottagui-Tabar S."/>
            <person name="Mulder N."/>
            <person name="Nakano N."/>
            <person name="Nakauchi H."/>
            <person name="Ng P."/>
            <person name="Nilsson R."/>
            <person name="Nishiguchi S."/>
            <person name="Nishikawa S."/>
            <person name="Nori F."/>
            <person name="Ohara O."/>
            <person name="Okazaki Y."/>
            <person name="Orlando V."/>
            <person name="Pang K.C."/>
            <person name="Pavan W.J."/>
            <person name="Pavesi G."/>
            <person name="Pesole G."/>
            <person name="Petrovsky N."/>
            <person name="Piazza S."/>
            <person name="Reed J."/>
            <person name="Reid J.F."/>
            <person name="Ring B.Z."/>
            <person name="Ringwald M."/>
            <person name="Rost B."/>
            <person name="Ruan Y."/>
            <person name="Salzberg S.L."/>
            <person name="Sandelin A."/>
            <person name="Schneider C."/>
            <person name="Schoenbach C."/>
            <person name="Sekiguchi K."/>
            <person name="Semple C.A."/>
            <person name="Seno S."/>
            <person name="Sessa L."/>
            <person name="Sheng Y."/>
            <person name="Shibata Y."/>
            <person name="Shimada H."/>
            <person name="Shimada K."/>
            <person name="Silva D."/>
            <person name="Sinclair B."/>
            <person name="Sperling S."/>
            <person name="Stupka E."/>
            <person name="Sugiura K."/>
            <person name="Sultana R."/>
            <person name="Takenaka Y."/>
            <person name="Taki K."/>
            <person name="Tammoja K."/>
            <person name="Tan S.L."/>
            <person name="Tang S."/>
            <person name="Taylor M.S."/>
            <person name="Tegner J."/>
            <person name="Teichmann S.A."/>
            <person name="Ueda H.R."/>
            <person name="van Nimwegen E."/>
            <person name="Verardo R."/>
            <person name="Wei C.L."/>
            <person name="Yagi K."/>
            <person name="Yamanishi H."/>
            <person name="Zabarovsky E."/>
            <person name="Zhu S."/>
            <person name="Zimmer A."/>
            <person name="Hide W."/>
            <person name="Bult C."/>
            <person name="Grimmond S.M."/>
            <person name="Teasdale R.D."/>
            <person name="Liu E.T."/>
            <person name="Brusic V."/>
            <person name="Quackenbush J."/>
            <person name="Wahlestedt C."/>
            <person name="Mattick J.S."/>
            <person name="Hume D.A."/>
            <person name="Kai C."/>
            <person name="Sasaki D."/>
            <person name="Tomaru Y."/>
            <person name="Fukuda S."/>
            <person name="Kanamori-Katayama M."/>
            <person name="Suzuki M."/>
            <person name="Aoki J."/>
            <person name="Arakawa T."/>
            <person name="Iida J."/>
            <person name="Imamura K."/>
            <person name="Itoh M."/>
            <person name="Kato T."/>
            <person name="Kawaji H."/>
            <person name="Kawagashira N."/>
            <person name="Kawashima T."/>
            <person name="Kojima M."/>
            <person name="Kondo S."/>
            <person name="Konno H."/>
            <person name="Nakano K."/>
            <person name="Ninomiya N."/>
            <person name="Nishio T."/>
            <person name="Okada M."/>
            <person name="Plessy C."/>
            <person name="Shibata K."/>
            <person name="Shiraki T."/>
            <person name="Suzuki S."/>
            <person name="Tagami M."/>
            <person name="Waki K."/>
            <person name="Watahiki A."/>
            <person name="Okamura-Oho Y."/>
            <person name="Suzuki H."/>
            <person name="Kawai J."/>
            <person name="Hayashizaki Y."/>
        </authorList>
    </citation>
    <scope>NUCLEOTIDE SEQUENCE [LARGE SCALE MRNA] (ISOFORMS 1 AND 2)</scope>
    <source>
        <strain>C57BL/6J</strain>
        <tissue>Pituitary</tissue>
        <tissue>Spinal cord</tissue>
    </source>
</reference>
<reference key="2">
    <citation type="journal article" date="2004" name="Genome Res.">
        <title>The status, quality, and expansion of the NIH full-length cDNA project: the Mammalian Gene Collection (MGC).</title>
        <authorList>
            <consortium name="The MGC Project Team"/>
        </authorList>
    </citation>
    <scope>NUCLEOTIDE SEQUENCE [LARGE SCALE MRNA] (ISOFORM 1)</scope>
    <source>
        <strain>129</strain>
        <tissue>Mammary tumor</tissue>
    </source>
</reference>
<organism>
    <name type="scientific">Mus musculus</name>
    <name type="common">Mouse</name>
    <dbReference type="NCBI Taxonomy" id="10090"/>
    <lineage>
        <taxon>Eukaryota</taxon>
        <taxon>Metazoa</taxon>
        <taxon>Chordata</taxon>
        <taxon>Craniata</taxon>
        <taxon>Vertebrata</taxon>
        <taxon>Euteleostomi</taxon>
        <taxon>Mammalia</taxon>
        <taxon>Eutheria</taxon>
        <taxon>Euarchontoglires</taxon>
        <taxon>Glires</taxon>
        <taxon>Rodentia</taxon>
        <taxon>Myomorpha</taxon>
        <taxon>Muroidea</taxon>
        <taxon>Muridae</taxon>
        <taxon>Murinae</taxon>
        <taxon>Mus</taxon>
        <taxon>Mus</taxon>
    </lineage>
</organism>
<accession>Q8VEL9</accession>
<accession>Q8BPB1</accession>
<gene>
    <name type="primary">Rem2</name>
</gene>
<keyword id="KW-0002">3D-structure</keyword>
<keyword id="KW-0025">Alternative splicing</keyword>
<keyword id="KW-1003">Cell membrane</keyword>
<keyword id="KW-0342">GTP-binding</keyword>
<keyword id="KW-0472">Membrane</keyword>
<keyword id="KW-0547">Nucleotide-binding</keyword>
<keyword id="KW-0597">Phosphoprotein</keyword>
<keyword id="KW-1185">Reference proteome</keyword>
<name>REM2_MOUSE</name>
<sequence>MHTDLDTDMDMDTETVALCSSSSRQASPLGTPTPEADTTLLKQKPEKLLAELDLSGPPPAPGVPRRRGSMPVPYKHQLRRAQAVDELDWPPQASPSGSSDSLGSGEAALTQKDGVFKVMLVGESGVGKSTLAGTFGGLQGDHAHEMENSEDTYERRIMVDKEEVTLIVYDIWEQGDAGGWLQDHCLQTGDAFLIVFSVTDRRGFSKVPETLLRLRAGRPHHDLPVILVGNKSDLARSREVSLEEGRHLAGTLSCKHIETSAALHHNTRELFEGAVRQIRLRRGRGHAGGQRPEPSSPDGPAPPTRRESLTKKAKRFLANLVPRNAKFFKQRSRSCHDLSVL</sequence>
<protein>
    <recommendedName>
        <fullName>GTP-binding protein REM 2</fullName>
    </recommendedName>
    <alternativeName>
        <fullName>Rad and Gem-like GTP-binding protein 2</fullName>
    </alternativeName>
</protein>
<comment type="function">
    <text evidence="2">Binds GTP saturably and exhibits a low intrinsic rate of GTP hydrolysis.</text>
</comment>
<comment type="subcellular location">
    <subcellularLocation>
        <location evidence="2">Cell membrane</location>
    </subcellularLocation>
</comment>
<comment type="alternative products">
    <event type="alternative splicing"/>
    <isoform>
        <id>Q8VEL9-1</id>
        <name>1</name>
        <sequence type="displayed"/>
    </isoform>
    <isoform>
        <id>Q8VEL9-2</id>
        <name>2</name>
        <sequence type="described" ref="VSP_038749"/>
    </isoform>
</comment>
<comment type="similarity">
    <text evidence="5">Belongs to the small GTPase superfamily. RGK family.</text>
</comment>
<comment type="sequence caution" evidence="5">
    <conflict type="erroneous initiation">
        <sequence resource="EMBL-CDS" id="AAH18219"/>
    </conflict>
</comment>
<comment type="sequence caution" evidence="5">
    <conflict type="erroneous initiation">
        <sequence resource="EMBL-CDS" id="BAC36746"/>
    </conflict>
</comment>
<feature type="chain" id="PRO_0000122484" description="GTP-binding protein REM 2">
    <location>
        <begin position="1"/>
        <end position="341"/>
    </location>
</feature>
<feature type="region of interest" description="Disordered" evidence="3">
    <location>
        <begin position="1"/>
        <end position="71"/>
    </location>
</feature>
<feature type="region of interest" description="Disordered" evidence="3">
    <location>
        <begin position="84"/>
        <end position="106"/>
    </location>
</feature>
<feature type="region of interest" description="Disordered" evidence="3">
    <location>
        <begin position="282"/>
        <end position="309"/>
    </location>
</feature>
<feature type="compositionally biased region" description="Acidic residues" evidence="3">
    <location>
        <begin position="1"/>
        <end position="13"/>
    </location>
</feature>
<feature type="compositionally biased region" description="Polar residues" evidence="3">
    <location>
        <begin position="18"/>
        <end position="30"/>
    </location>
</feature>
<feature type="compositionally biased region" description="Low complexity" evidence="3">
    <location>
        <begin position="90"/>
        <end position="106"/>
    </location>
</feature>
<feature type="compositionally biased region" description="Pro residues" evidence="3">
    <location>
        <begin position="294"/>
        <end position="303"/>
    </location>
</feature>
<feature type="binding site" evidence="1">
    <location>
        <begin position="122"/>
        <end position="129"/>
    </location>
    <ligand>
        <name>GTP</name>
        <dbReference type="ChEBI" id="CHEBI:37565"/>
    </ligand>
</feature>
<feature type="binding site" evidence="1">
    <location>
        <begin position="230"/>
        <end position="233"/>
    </location>
    <ligand>
        <name>GTP</name>
        <dbReference type="ChEBI" id="CHEBI:37565"/>
    </ligand>
</feature>
<feature type="binding site" evidence="1">
    <location>
        <begin position="261"/>
        <end position="262"/>
    </location>
    <ligand>
        <name>GTP</name>
        <dbReference type="ChEBI" id="CHEBI:37565"/>
    </ligand>
</feature>
<feature type="modified residue" description="Phosphoserine" evidence="2">
    <location>
        <position position="27"/>
    </location>
</feature>
<feature type="modified residue" description="Phosphoserine" evidence="2">
    <location>
        <position position="296"/>
    </location>
</feature>
<feature type="splice variant" id="VSP_038749" description="In isoform 2." evidence="4">
    <location>
        <begin position="1"/>
        <end position="69"/>
    </location>
</feature>
<feature type="sequence conflict" description="In Ref. 2; AAH18219." evidence="5" ref="2">
    <original>TET</original>
    <variation>IEI</variation>
    <location>
        <begin position="13"/>
        <end position="15"/>
    </location>
</feature>
<feature type="sequence conflict" description="In Ref. 2; AAH18219." evidence="5" ref="2">
    <original>G</original>
    <variation>S</variation>
    <location>
        <position position="203"/>
    </location>
</feature>
<feature type="strand" evidence="6">
    <location>
        <begin position="115"/>
        <end position="121"/>
    </location>
</feature>
<feature type="helix" evidence="6">
    <location>
        <begin position="128"/>
        <end position="136"/>
    </location>
</feature>
<feature type="strand" evidence="6">
    <location>
        <begin position="152"/>
        <end position="159"/>
    </location>
</feature>
<feature type="strand" evidence="6">
    <location>
        <begin position="162"/>
        <end position="169"/>
    </location>
</feature>
<feature type="helix" evidence="6">
    <location>
        <begin position="184"/>
        <end position="188"/>
    </location>
</feature>
<feature type="strand" evidence="6">
    <location>
        <begin position="190"/>
        <end position="197"/>
    </location>
</feature>
<feature type="helix" evidence="6">
    <location>
        <begin position="201"/>
        <end position="205"/>
    </location>
</feature>
<feature type="helix" evidence="6">
    <location>
        <begin position="207"/>
        <end position="217"/>
    </location>
</feature>
<feature type="strand" evidence="6">
    <location>
        <begin position="225"/>
        <end position="230"/>
    </location>
</feature>
<feature type="helix" evidence="6">
    <location>
        <begin position="235"/>
        <end position="237"/>
    </location>
</feature>
<feature type="helix" evidence="6">
    <location>
        <begin position="242"/>
        <end position="251"/>
    </location>
</feature>
<feature type="strand" evidence="6">
    <location>
        <begin position="255"/>
        <end position="258"/>
    </location>
</feature>
<feature type="turn" evidence="6">
    <location>
        <begin position="261"/>
        <end position="264"/>
    </location>
</feature>
<feature type="helix" evidence="6">
    <location>
        <begin position="267"/>
        <end position="280"/>
    </location>
</feature>
<evidence type="ECO:0000250" key="1">
    <source>
        <dbReference type="UniProtKB" id="Q8IYK8"/>
    </source>
</evidence>
<evidence type="ECO:0000250" key="2">
    <source>
        <dbReference type="UniProtKB" id="Q9WTY2"/>
    </source>
</evidence>
<evidence type="ECO:0000256" key="3">
    <source>
        <dbReference type="SAM" id="MobiDB-lite"/>
    </source>
</evidence>
<evidence type="ECO:0000303" key="4">
    <source>
    </source>
</evidence>
<evidence type="ECO:0000305" key="5"/>
<evidence type="ECO:0007829" key="6">
    <source>
        <dbReference type="PDB" id="3Q85"/>
    </source>
</evidence>
<proteinExistence type="evidence at protein level"/>